<keyword id="KW-0143">Chaperone</keyword>
<keyword id="KW-0963">Cytoplasm</keyword>
<keyword id="KW-0690">Ribosome biogenesis</keyword>
<keyword id="KW-0698">rRNA processing</keyword>
<name>RIMM_RICRO</name>
<dbReference type="EMBL" id="CP000766">
    <property type="protein sequence ID" value="ABY72439.1"/>
    <property type="molecule type" value="Genomic_DNA"/>
</dbReference>
<dbReference type="RefSeq" id="WP_012262331.1">
    <property type="nucleotide sequence ID" value="NC_010263.3"/>
</dbReference>
<dbReference type="SMR" id="B0BX63"/>
<dbReference type="KEGG" id="rrj:RrIowa_0565"/>
<dbReference type="eggNOG" id="COG0806">
    <property type="taxonomic scope" value="Bacteria"/>
</dbReference>
<dbReference type="HOGENOM" id="CLU_077636_0_1_5"/>
<dbReference type="Proteomes" id="UP000000796">
    <property type="component" value="Chromosome"/>
</dbReference>
<dbReference type="GO" id="GO:0005737">
    <property type="term" value="C:cytoplasm"/>
    <property type="evidence" value="ECO:0007669"/>
    <property type="project" value="UniProtKB-SubCell"/>
</dbReference>
<dbReference type="GO" id="GO:0005840">
    <property type="term" value="C:ribosome"/>
    <property type="evidence" value="ECO:0007669"/>
    <property type="project" value="InterPro"/>
</dbReference>
<dbReference type="GO" id="GO:0043022">
    <property type="term" value="F:ribosome binding"/>
    <property type="evidence" value="ECO:0007669"/>
    <property type="project" value="InterPro"/>
</dbReference>
<dbReference type="GO" id="GO:0042274">
    <property type="term" value="P:ribosomal small subunit biogenesis"/>
    <property type="evidence" value="ECO:0007669"/>
    <property type="project" value="UniProtKB-UniRule"/>
</dbReference>
<dbReference type="GO" id="GO:0006364">
    <property type="term" value="P:rRNA processing"/>
    <property type="evidence" value="ECO:0007669"/>
    <property type="project" value="UniProtKB-UniRule"/>
</dbReference>
<dbReference type="Gene3D" id="2.30.30.240">
    <property type="entry name" value="PRC-barrel domain"/>
    <property type="match status" value="1"/>
</dbReference>
<dbReference type="Gene3D" id="2.40.30.60">
    <property type="entry name" value="RimM"/>
    <property type="match status" value="1"/>
</dbReference>
<dbReference type="HAMAP" id="MF_00014">
    <property type="entry name" value="Ribosome_mat_RimM"/>
    <property type="match status" value="1"/>
</dbReference>
<dbReference type="InterPro" id="IPR027275">
    <property type="entry name" value="PRC-brl_dom"/>
</dbReference>
<dbReference type="InterPro" id="IPR011033">
    <property type="entry name" value="PRC_barrel-like_sf"/>
</dbReference>
<dbReference type="InterPro" id="IPR011961">
    <property type="entry name" value="RimM"/>
</dbReference>
<dbReference type="InterPro" id="IPR002676">
    <property type="entry name" value="RimM_N"/>
</dbReference>
<dbReference type="InterPro" id="IPR036976">
    <property type="entry name" value="RimM_N_sf"/>
</dbReference>
<dbReference type="InterPro" id="IPR009000">
    <property type="entry name" value="Transl_B-barrel_sf"/>
</dbReference>
<dbReference type="NCBIfam" id="TIGR02273">
    <property type="entry name" value="16S_RimM"/>
    <property type="match status" value="1"/>
</dbReference>
<dbReference type="PANTHER" id="PTHR33692">
    <property type="entry name" value="RIBOSOME MATURATION FACTOR RIMM"/>
    <property type="match status" value="1"/>
</dbReference>
<dbReference type="PANTHER" id="PTHR33692:SF1">
    <property type="entry name" value="RIBOSOME MATURATION FACTOR RIMM"/>
    <property type="match status" value="1"/>
</dbReference>
<dbReference type="Pfam" id="PF05239">
    <property type="entry name" value="PRC"/>
    <property type="match status" value="1"/>
</dbReference>
<dbReference type="Pfam" id="PF01782">
    <property type="entry name" value="RimM"/>
    <property type="match status" value="1"/>
</dbReference>
<dbReference type="SUPFAM" id="SSF50346">
    <property type="entry name" value="PRC-barrel domain"/>
    <property type="match status" value="1"/>
</dbReference>
<dbReference type="SUPFAM" id="SSF50447">
    <property type="entry name" value="Translation proteins"/>
    <property type="match status" value="1"/>
</dbReference>
<organism>
    <name type="scientific">Rickettsia rickettsii (strain Iowa)</name>
    <dbReference type="NCBI Taxonomy" id="452659"/>
    <lineage>
        <taxon>Bacteria</taxon>
        <taxon>Pseudomonadati</taxon>
        <taxon>Pseudomonadota</taxon>
        <taxon>Alphaproteobacteria</taxon>
        <taxon>Rickettsiales</taxon>
        <taxon>Rickettsiaceae</taxon>
        <taxon>Rickettsieae</taxon>
        <taxon>Rickettsia</taxon>
        <taxon>spotted fever group</taxon>
    </lineage>
</organism>
<accession>B0BX63</accession>
<evidence type="ECO:0000255" key="1">
    <source>
        <dbReference type="HAMAP-Rule" id="MF_00014"/>
    </source>
</evidence>
<protein>
    <recommendedName>
        <fullName evidence="1">Ribosome maturation factor RimM</fullName>
    </recommendedName>
</protein>
<sequence>MNSLENLILVGVIKSCHGIKGHVMLKSFTDPATKILERNLVNESGANIYIKLISQNAKGELICTFNDIATRNEAEHLKGYKIFCLRASLPELEEDEFYIADLTHLPVLNQDHKEIGKIKNILNFGAGDIIEIEFSDQTTELLPFNKEFFPIITKDYVILNYQREA</sequence>
<gene>
    <name evidence="1" type="primary">rimM</name>
    <name type="ordered locus">RrIowa_0565</name>
</gene>
<proteinExistence type="inferred from homology"/>
<reference key="1">
    <citation type="journal article" date="2008" name="Infect. Immun.">
        <title>Genomic comparison of virulent Rickettsia rickettsii Sheila Smith and avirulent Rickettsia rickettsii Iowa.</title>
        <authorList>
            <person name="Ellison D.W."/>
            <person name="Clark T.R."/>
            <person name="Sturdevant D.E."/>
            <person name="Virtaneva K."/>
            <person name="Porcella S.F."/>
            <person name="Hackstadt T."/>
        </authorList>
    </citation>
    <scope>NUCLEOTIDE SEQUENCE [LARGE SCALE GENOMIC DNA]</scope>
    <source>
        <strain>Iowa</strain>
    </source>
</reference>
<comment type="function">
    <text evidence="1">An accessory protein needed during the final step in the assembly of 30S ribosomal subunit, possibly for assembly of the head region. Essential for efficient processing of 16S rRNA. May be needed both before and after RbfA during the maturation of 16S rRNA. It has affinity for free ribosomal 30S subunits but not for 70S ribosomes.</text>
</comment>
<comment type="subunit">
    <text evidence="1">Binds ribosomal protein uS19.</text>
</comment>
<comment type="subcellular location">
    <subcellularLocation>
        <location evidence="1">Cytoplasm</location>
    </subcellularLocation>
</comment>
<comment type="domain">
    <text evidence="1">The PRC barrel domain binds ribosomal protein uS19.</text>
</comment>
<comment type="similarity">
    <text evidence="1">Belongs to the RimM family.</text>
</comment>
<feature type="chain" id="PRO_1000074037" description="Ribosome maturation factor RimM">
    <location>
        <begin position="1"/>
        <end position="165"/>
    </location>
</feature>
<feature type="domain" description="PRC barrel" evidence="1">
    <location>
        <begin position="94"/>
        <end position="165"/>
    </location>
</feature>